<sequence length="306" mass="36138">MNDYNHYFHFPREEWRKLEVSKDQILTAEELEEIRGLNDRISLQDISEIYLPLIKLIAIQYHEAIFIHGEKMEYLKKKESRAPFIIALAGSVAVGKSTTARVFKLMLDRWFSKTRQVELVTTDGFLFPNKVLEERGIMNKKGFPESYDRDRFAKFLTDLKTNKEAVEVPLYSHFTYDVLDETRMMHNPDIVIIEGINVLQADQHESLFPSDFFDFSVYMDAAEADIKKWYLERFFMLRETAFQDKSSYFHQYTKINKKEAETFALGVWDTINGVNLKENIEKTKYRADLVLHKGTDHLISDIYLRK</sequence>
<feature type="chain" id="PRO_1000043224" description="Pantothenate kinase">
    <location>
        <begin position="1"/>
        <end position="306"/>
    </location>
</feature>
<feature type="binding site" evidence="1">
    <location>
        <begin position="90"/>
        <end position="97"/>
    </location>
    <ligand>
        <name>ATP</name>
        <dbReference type="ChEBI" id="CHEBI:30616"/>
    </ligand>
</feature>
<name>COAA_LISW6</name>
<evidence type="ECO:0000255" key="1">
    <source>
        <dbReference type="HAMAP-Rule" id="MF_00215"/>
    </source>
</evidence>
<proteinExistence type="inferred from homology"/>
<keyword id="KW-0067">ATP-binding</keyword>
<keyword id="KW-0173">Coenzyme A biosynthesis</keyword>
<keyword id="KW-0963">Cytoplasm</keyword>
<keyword id="KW-0418">Kinase</keyword>
<keyword id="KW-0547">Nucleotide-binding</keyword>
<keyword id="KW-0808">Transferase</keyword>
<protein>
    <recommendedName>
        <fullName evidence="1">Pantothenate kinase</fullName>
        <ecNumber evidence="1">2.7.1.33</ecNumber>
    </recommendedName>
    <alternativeName>
        <fullName evidence="1">Pantothenic acid kinase</fullName>
    </alternativeName>
</protein>
<reference key="1">
    <citation type="journal article" date="2006" name="J. Bacteriol.">
        <title>Whole-genome sequence of Listeria welshimeri reveals common steps in genome reduction with Listeria innocua as compared to Listeria monocytogenes.</title>
        <authorList>
            <person name="Hain T."/>
            <person name="Steinweg C."/>
            <person name="Kuenne C.T."/>
            <person name="Billion A."/>
            <person name="Ghai R."/>
            <person name="Chatterjee S.S."/>
            <person name="Domann E."/>
            <person name="Kaerst U."/>
            <person name="Goesmann A."/>
            <person name="Bekel T."/>
            <person name="Bartels D."/>
            <person name="Kaiser O."/>
            <person name="Meyer F."/>
            <person name="Puehler A."/>
            <person name="Weisshaar B."/>
            <person name="Wehland J."/>
            <person name="Liang C."/>
            <person name="Dandekar T."/>
            <person name="Lampidis R."/>
            <person name="Kreft J."/>
            <person name="Goebel W."/>
            <person name="Chakraborty T."/>
        </authorList>
    </citation>
    <scope>NUCLEOTIDE SEQUENCE [LARGE SCALE GENOMIC DNA]</scope>
    <source>
        <strain>ATCC 35897 / DSM 20650 / CCUG 15529 / CIP 8149 / NCTC 11857 / SLCC 5334 / V8</strain>
    </source>
</reference>
<organism>
    <name type="scientific">Listeria welshimeri serovar 6b (strain ATCC 35897 / DSM 20650 / CCUG 15529 / CIP 8149 / NCTC 11857 / SLCC 5334 / V8)</name>
    <dbReference type="NCBI Taxonomy" id="386043"/>
    <lineage>
        <taxon>Bacteria</taxon>
        <taxon>Bacillati</taxon>
        <taxon>Bacillota</taxon>
        <taxon>Bacilli</taxon>
        <taxon>Bacillales</taxon>
        <taxon>Listeriaceae</taxon>
        <taxon>Listeria</taxon>
    </lineage>
</organism>
<gene>
    <name evidence="1" type="primary">coaA</name>
    <name type="ordered locus">lwe0901</name>
</gene>
<accession>A0AH37</accession>
<dbReference type="EC" id="2.7.1.33" evidence="1"/>
<dbReference type="EMBL" id="AM263198">
    <property type="protein sequence ID" value="CAK20319.1"/>
    <property type="molecule type" value="Genomic_DNA"/>
</dbReference>
<dbReference type="RefSeq" id="WP_011701732.1">
    <property type="nucleotide sequence ID" value="NC_008555.1"/>
</dbReference>
<dbReference type="SMR" id="A0AH37"/>
<dbReference type="STRING" id="386043.lwe0901"/>
<dbReference type="GeneID" id="61188791"/>
<dbReference type="KEGG" id="lwe:lwe0901"/>
<dbReference type="eggNOG" id="COG1072">
    <property type="taxonomic scope" value="Bacteria"/>
</dbReference>
<dbReference type="HOGENOM" id="CLU_053818_1_1_9"/>
<dbReference type="OrthoDB" id="1550976at2"/>
<dbReference type="UniPathway" id="UPA00241">
    <property type="reaction ID" value="UER00352"/>
</dbReference>
<dbReference type="Proteomes" id="UP000000779">
    <property type="component" value="Chromosome"/>
</dbReference>
<dbReference type="GO" id="GO:0005737">
    <property type="term" value="C:cytoplasm"/>
    <property type="evidence" value="ECO:0007669"/>
    <property type="project" value="UniProtKB-SubCell"/>
</dbReference>
<dbReference type="GO" id="GO:0005524">
    <property type="term" value="F:ATP binding"/>
    <property type="evidence" value="ECO:0007669"/>
    <property type="project" value="UniProtKB-UniRule"/>
</dbReference>
<dbReference type="GO" id="GO:0004594">
    <property type="term" value="F:pantothenate kinase activity"/>
    <property type="evidence" value="ECO:0007669"/>
    <property type="project" value="UniProtKB-UniRule"/>
</dbReference>
<dbReference type="GO" id="GO:0015937">
    <property type="term" value="P:coenzyme A biosynthetic process"/>
    <property type="evidence" value="ECO:0007669"/>
    <property type="project" value="UniProtKB-UniRule"/>
</dbReference>
<dbReference type="CDD" id="cd02025">
    <property type="entry name" value="PanK"/>
    <property type="match status" value="1"/>
</dbReference>
<dbReference type="Gene3D" id="3.40.50.300">
    <property type="entry name" value="P-loop containing nucleotide triphosphate hydrolases"/>
    <property type="match status" value="1"/>
</dbReference>
<dbReference type="HAMAP" id="MF_00215">
    <property type="entry name" value="Pantothen_kinase_1"/>
    <property type="match status" value="1"/>
</dbReference>
<dbReference type="InterPro" id="IPR027417">
    <property type="entry name" value="P-loop_NTPase"/>
</dbReference>
<dbReference type="InterPro" id="IPR004566">
    <property type="entry name" value="PanK"/>
</dbReference>
<dbReference type="InterPro" id="IPR006083">
    <property type="entry name" value="PRK/URK"/>
</dbReference>
<dbReference type="NCBIfam" id="TIGR00554">
    <property type="entry name" value="panK_bact"/>
    <property type="match status" value="1"/>
</dbReference>
<dbReference type="PANTHER" id="PTHR10285">
    <property type="entry name" value="URIDINE KINASE"/>
    <property type="match status" value="1"/>
</dbReference>
<dbReference type="Pfam" id="PF00485">
    <property type="entry name" value="PRK"/>
    <property type="match status" value="1"/>
</dbReference>
<dbReference type="PIRSF" id="PIRSF000545">
    <property type="entry name" value="Pantothenate_kin"/>
    <property type="match status" value="1"/>
</dbReference>
<dbReference type="SUPFAM" id="SSF52540">
    <property type="entry name" value="P-loop containing nucleoside triphosphate hydrolases"/>
    <property type="match status" value="1"/>
</dbReference>
<comment type="catalytic activity">
    <reaction evidence="1">
        <text>(R)-pantothenate + ATP = (R)-4'-phosphopantothenate + ADP + H(+)</text>
        <dbReference type="Rhea" id="RHEA:16373"/>
        <dbReference type="ChEBI" id="CHEBI:10986"/>
        <dbReference type="ChEBI" id="CHEBI:15378"/>
        <dbReference type="ChEBI" id="CHEBI:29032"/>
        <dbReference type="ChEBI" id="CHEBI:30616"/>
        <dbReference type="ChEBI" id="CHEBI:456216"/>
        <dbReference type="EC" id="2.7.1.33"/>
    </reaction>
</comment>
<comment type="pathway">
    <text evidence="1">Cofactor biosynthesis; coenzyme A biosynthesis; CoA from (R)-pantothenate: step 1/5.</text>
</comment>
<comment type="subcellular location">
    <subcellularLocation>
        <location evidence="1">Cytoplasm</location>
    </subcellularLocation>
</comment>
<comment type="similarity">
    <text evidence="1">Belongs to the prokaryotic pantothenate kinase family.</text>
</comment>